<comment type="function">
    <text evidence="1">Component of the cap-binding complex (CBC), which binds co-transcriptionally to the 5' cap of pre-mRNAs and is involved in various processes such as pre-mRNA splicing and RNA-mediated gene silencing (RNAi) by microRNAs (miRNAs). The CBC complex is involved in miRNA-mediated RNA interference and is required for primary miRNA processing. In the CBC complex, CBP20 recognizes and binds capped RNAs (m7GpppG-capped RNA) but requires ABH1/CBP80 to stabilize the movement of its N-terminal loop and lock the CBC into a high affinity cap-binding state with the cap structure. CBP20 also plays a role in stabilization of ABH1/CBP80 and ABH1/CBP80 localization to the nucleus (By similarity).</text>
</comment>
<comment type="subunit">
    <text evidence="1">Component of the nuclear cap-binding complex (CBC), a heterodimer composed of ABH1/CBP80 and CBP20 that interacts with m7GpppG-capped RNA.</text>
</comment>
<comment type="subcellular location">
    <subcellularLocation>
        <location evidence="1">Nucleus</location>
    </subcellularLocation>
    <subcellularLocation>
        <location evidence="1">Cytoplasm</location>
    </subcellularLocation>
    <text evidence="1">Predominantly nuclear.</text>
</comment>
<comment type="similarity">
    <text evidence="4">Belongs to the RRM NCBP2 family.</text>
</comment>
<accession>Q84L14</accession>
<accession>A0A0P0VLM0</accession>
<dbReference type="EMBL" id="AY278997">
    <property type="protein sequence ID" value="AAP33448.1"/>
    <property type="molecule type" value="mRNA"/>
</dbReference>
<dbReference type="EMBL" id="AP005286">
    <property type="protein sequence ID" value="BAD19690.1"/>
    <property type="molecule type" value="Genomic_DNA"/>
</dbReference>
<dbReference type="EMBL" id="AP008208">
    <property type="protein sequence ID" value="BAF09326.1"/>
    <property type="molecule type" value="Genomic_DNA"/>
</dbReference>
<dbReference type="EMBL" id="AP014958">
    <property type="protein sequence ID" value="BAS79728.1"/>
    <property type="molecule type" value="Genomic_DNA"/>
</dbReference>
<dbReference type="EMBL" id="AK101546">
    <property type="protein sequence ID" value="BAG95116.1"/>
    <property type="molecule type" value="mRNA"/>
</dbReference>
<dbReference type="RefSeq" id="XP_015625308.1">
    <property type="nucleotide sequence ID" value="XM_015769822.1"/>
</dbReference>
<dbReference type="SMR" id="Q84L14"/>
<dbReference type="FunCoup" id="Q84L14">
    <property type="interactions" value="3301"/>
</dbReference>
<dbReference type="STRING" id="39947.Q84L14"/>
<dbReference type="iPTMnet" id="Q84L14"/>
<dbReference type="PaxDb" id="39947-Q84L14"/>
<dbReference type="EnsemblPlants" id="Os02t0612300-01">
    <property type="protein sequence ID" value="Os02t0612300-01"/>
    <property type="gene ID" value="Os02g0612300"/>
</dbReference>
<dbReference type="Gramene" id="Os02t0612300-01">
    <property type="protein sequence ID" value="Os02t0612300-01"/>
    <property type="gene ID" value="Os02g0612300"/>
</dbReference>
<dbReference type="KEGG" id="dosa:Os02g0612300"/>
<dbReference type="eggNOG" id="KOG0121">
    <property type="taxonomic scope" value="Eukaryota"/>
</dbReference>
<dbReference type="HOGENOM" id="CLU_070952_0_0_1"/>
<dbReference type="InParanoid" id="Q84L14"/>
<dbReference type="OMA" id="NAPPQYD"/>
<dbReference type="OrthoDB" id="201398at2759"/>
<dbReference type="Proteomes" id="UP000000763">
    <property type="component" value="Chromosome 2"/>
</dbReference>
<dbReference type="Proteomes" id="UP000059680">
    <property type="component" value="Chromosome 2"/>
</dbReference>
<dbReference type="GO" id="GO:0005737">
    <property type="term" value="C:cytoplasm"/>
    <property type="evidence" value="ECO:0007669"/>
    <property type="project" value="UniProtKB-SubCell"/>
</dbReference>
<dbReference type="GO" id="GO:0005846">
    <property type="term" value="C:nuclear cap binding complex"/>
    <property type="evidence" value="ECO:0000318"/>
    <property type="project" value="GO_Central"/>
</dbReference>
<dbReference type="GO" id="GO:0005634">
    <property type="term" value="C:nucleus"/>
    <property type="evidence" value="ECO:0007669"/>
    <property type="project" value="UniProtKB-SubCell"/>
</dbReference>
<dbReference type="GO" id="GO:0000339">
    <property type="term" value="F:RNA cap binding"/>
    <property type="evidence" value="ECO:0000318"/>
    <property type="project" value="GO_Central"/>
</dbReference>
<dbReference type="GO" id="GO:1901527">
    <property type="term" value="P:abscisic acid-activated signaling pathway involved in stomatal movement"/>
    <property type="evidence" value="ECO:0007669"/>
    <property type="project" value="EnsemblPlants"/>
</dbReference>
<dbReference type="GO" id="GO:0000380">
    <property type="term" value="P:alternative mRNA splicing, via spliceosome"/>
    <property type="evidence" value="ECO:0007669"/>
    <property type="project" value="EnsemblPlants"/>
</dbReference>
<dbReference type="GO" id="GO:0051607">
    <property type="term" value="P:defense response to virus"/>
    <property type="evidence" value="ECO:0007669"/>
    <property type="project" value="EnsemblPlants"/>
</dbReference>
<dbReference type="GO" id="GO:0045292">
    <property type="term" value="P:mRNA cis splicing, via spliceosome"/>
    <property type="evidence" value="ECO:0007669"/>
    <property type="project" value="InterPro"/>
</dbReference>
<dbReference type="GO" id="GO:0000398">
    <property type="term" value="P:mRNA splicing, via spliceosome"/>
    <property type="evidence" value="ECO:0000318"/>
    <property type="project" value="GO_Central"/>
</dbReference>
<dbReference type="GO" id="GO:0031053">
    <property type="term" value="P:primary miRNA processing"/>
    <property type="evidence" value="ECO:0007669"/>
    <property type="project" value="EnsemblPlants"/>
</dbReference>
<dbReference type="GO" id="GO:0000394">
    <property type="term" value="P:RNA splicing, via endonucleolytic cleavage and ligation"/>
    <property type="evidence" value="ECO:0007669"/>
    <property type="project" value="EnsemblPlants"/>
</dbReference>
<dbReference type="CDD" id="cd12240">
    <property type="entry name" value="RRM_NCBP2"/>
    <property type="match status" value="1"/>
</dbReference>
<dbReference type="FunFam" id="3.30.70.330:FF:000128">
    <property type="entry name" value="Nuclear cap-binding protein subunit 2"/>
    <property type="match status" value="1"/>
</dbReference>
<dbReference type="Gene3D" id="3.30.70.330">
    <property type="match status" value="1"/>
</dbReference>
<dbReference type="InterPro" id="IPR027157">
    <property type="entry name" value="NCBP2"/>
</dbReference>
<dbReference type="InterPro" id="IPR034148">
    <property type="entry name" value="NCBP2_RRM"/>
</dbReference>
<dbReference type="InterPro" id="IPR012677">
    <property type="entry name" value="Nucleotide-bd_a/b_plait_sf"/>
</dbReference>
<dbReference type="InterPro" id="IPR035979">
    <property type="entry name" value="RBD_domain_sf"/>
</dbReference>
<dbReference type="InterPro" id="IPR000504">
    <property type="entry name" value="RRM_dom"/>
</dbReference>
<dbReference type="PANTHER" id="PTHR18847">
    <property type="entry name" value="20 KD NUCLEAR CAP BINDING PROTEIN"/>
    <property type="match status" value="1"/>
</dbReference>
<dbReference type="PANTHER" id="PTHR18847:SF0">
    <property type="entry name" value="NUCLEAR CAP-BINDING PROTEIN SUBUNIT 2"/>
    <property type="match status" value="1"/>
</dbReference>
<dbReference type="Pfam" id="PF00076">
    <property type="entry name" value="RRM_1"/>
    <property type="match status" value="1"/>
</dbReference>
<dbReference type="SMART" id="SM00360">
    <property type="entry name" value="RRM"/>
    <property type="match status" value="1"/>
</dbReference>
<dbReference type="SUPFAM" id="SSF54928">
    <property type="entry name" value="RNA-binding domain, RBD"/>
    <property type="match status" value="1"/>
</dbReference>
<dbReference type="PROSITE" id="PS50102">
    <property type="entry name" value="RRM"/>
    <property type="match status" value="1"/>
</dbReference>
<name>NCBP2_ORYSJ</name>
<proteinExistence type="evidence at transcript level"/>
<protein>
    <recommendedName>
        <fullName>Nuclear cap-binding protein subunit 2</fullName>
    </recommendedName>
    <alternativeName>
        <fullName>20 kDa nuclear cap-binding protein</fullName>
    </alternativeName>
    <alternativeName>
        <fullName>NCBP 20 kDa subunit</fullName>
        <shortName>CBP20</shortName>
    </alternativeName>
</protein>
<feature type="chain" id="PRO_0000385278" description="Nuclear cap-binding protein subunit 2">
    <location>
        <begin position="1"/>
        <end position="243"/>
    </location>
</feature>
<feature type="domain" description="RRM" evidence="2">
    <location>
        <begin position="34"/>
        <end position="112"/>
    </location>
</feature>
<feature type="region of interest" description="Disordered" evidence="3">
    <location>
        <begin position="120"/>
        <end position="144"/>
    </location>
</feature>
<feature type="region of interest" description="Disordered" evidence="3">
    <location>
        <begin position="161"/>
        <end position="243"/>
    </location>
</feature>
<feature type="compositionally biased region" description="Basic and acidic residues" evidence="3">
    <location>
        <begin position="128"/>
        <end position="138"/>
    </location>
</feature>
<feature type="compositionally biased region" description="Basic and acidic residues" evidence="3">
    <location>
        <begin position="173"/>
        <end position="228"/>
    </location>
</feature>
<feature type="binding site" evidence="1">
    <location>
        <position position="14"/>
    </location>
    <ligand>
        <name>mRNA</name>
        <dbReference type="ChEBI" id="CHEBI:33699"/>
    </ligand>
    <ligandPart>
        <name>mRNA cap</name>
    </ligandPart>
</feature>
<feature type="binding site" evidence="1">
    <location>
        <position position="37"/>
    </location>
    <ligand>
        <name>mRNA</name>
        <dbReference type="ChEBI" id="CHEBI:33699"/>
    </ligand>
    <ligandPart>
        <name>mRNA cap</name>
    </ligandPart>
</feature>
<feature type="binding site" evidence="1">
    <location>
        <begin position="106"/>
        <end position="110"/>
    </location>
    <ligand>
        <name>mRNA</name>
        <dbReference type="ChEBI" id="CHEBI:33699"/>
    </ligand>
    <ligandPart>
        <name>mRNA cap</name>
    </ligandPart>
</feature>
<feature type="binding site" evidence="1">
    <location>
        <begin position="117"/>
        <end position="121"/>
    </location>
    <ligand>
        <name>mRNA</name>
        <dbReference type="ChEBI" id="CHEBI:33699"/>
    </ligand>
    <ligandPart>
        <name>mRNA cap</name>
    </ligandPart>
</feature>
<feature type="binding site" evidence="1">
    <location>
        <begin position="127"/>
        <end position="128"/>
    </location>
    <ligand>
        <name>mRNA</name>
        <dbReference type="ChEBI" id="CHEBI:33699"/>
    </ligand>
    <ligandPart>
        <name>mRNA cap</name>
    </ligandPart>
</feature>
<keyword id="KW-0963">Cytoplasm</keyword>
<keyword id="KW-0507">mRNA processing</keyword>
<keyword id="KW-0508">mRNA splicing</keyword>
<keyword id="KW-0539">Nucleus</keyword>
<keyword id="KW-1185">Reference proteome</keyword>
<keyword id="KW-0694">RNA-binding</keyword>
<keyword id="KW-0943">RNA-mediated gene silencing</keyword>
<sequence>MASLFKDPTKLSAYRDRRFTGTQEEYEAALQASVTVYVGNMSFYTTEEQAYELFSRAGEIRKIIMGLDKNSKTPCGFCFILYYSREDAEDAVKYISGTMLDDRPIRVDFDWGFEEGRQWGRGRSGGQVRDEYRTDYDPGRGGYGKMVQKELEAQRELVDYGGAFQPNAPPQYDRGDRKRGYGDSYRNDRDYQRKRYRNDERSSQRAPDSEFKRDAIDSEKNPRFREKGDSDEEDDDYDKRRRR</sequence>
<gene>
    <name type="primary">CBP20</name>
    <name type="ordered locus">Os02g0612300</name>
    <name type="ordered locus">LOC_Os02g39890</name>
    <name type="ORF">OJ1004_A05.24</name>
</gene>
<evidence type="ECO:0000250" key="1"/>
<evidence type="ECO:0000255" key="2">
    <source>
        <dbReference type="PROSITE-ProRule" id="PRU00176"/>
    </source>
</evidence>
<evidence type="ECO:0000256" key="3">
    <source>
        <dbReference type="SAM" id="MobiDB-lite"/>
    </source>
</evidence>
<evidence type="ECO:0000305" key="4"/>
<organism>
    <name type="scientific">Oryza sativa subsp. japonica</name>
    <name type="common">Rice</name>
    <dbReference type="NCBI Taxonomy" id="39947"/>
    <lineage>
        <taxon>Eukaryota</taxon>
        <taxon>Viridiplantae</taxon>
        <taxon>Streptophyta</taxon>
        <taxon>Embryophyta</taxon>
        <taxon>Tracheophyta</taxon>
        <taxon>Spermatophyta</taxon>
        <taxon>Magnoliopsida</taxon>
        <taxon>Liliopsida</taxon>
        <taxon>Poales</taxon>
        <taxon>Poaceae</taxon>
        <taxon>BOP clade</taxon>
        <taxon>Oryzoideae</taxon>
        <taxon>Oryzeae</taxon>
        <taxon>Oryzinae</taxon>
        <taxon>Oryza</taxon>
        <taxon>Oryza sativa</taxon>
    </lineage>
</organism>
<reference key="1">
    <citation type="submission" date="2003-04" db="EMBL/GenBank/DDBJ databases">
        <authorList>
            <person name="Kmieciak M."/>
            <person name="Rogowski A."/>
            <person name="Jarmolowski A."/>
        </authorList>
    </citation>
    <scope>NUCLEOTIDE SEQUENCE [MRNA]</scope>
    <source>
        <strain>cv. Nipponbare</strain>
    </source>
</reference>
<reference key="2">
    <citation type="journal article" date="2005" name="Nature">
        <title>The map-based sequence of the rice genome.</title>
        <authorList>
            <consortium name="International rice genome sequencing project (IRGSP)"/>
        </authorList>
    </citation>
    <scope>NUCLEOTIDE SEQUENCE [LARGE SCALE GENOMIC DNA]</scope>
    <source>
        <strain>cv. Nipponbare</strain>
    </source>
</reference>
<reference key="3">
    <citation type="journal article" date="2008" name="Nucleic Acids Res.">
        <title>The rice annotation project database (RAP-DB): 2008 update.</title>
        <authorList>
            <consortium name="The rice annotation project (RAP)"/>
        </authorList>
    </citation>
    <scope>GENOME REANNOTATION</scope>
    <source>
        <strain>cv. Nipponbare</strain>
    </source>
</reference>
<reference key="4">
    <citation type="journal article" date="2013" name="Rice">
        <title>Improvement of the Oryza sativa Nipponbare reference genome using next generation sequence and optical map data.</title>
        <authorList>
            <person name="Kawahara Y."/>
            <person name="de la Bastide M."/>
            <person name="Hamilton J.P."/>
            <person name="Kanamori H."/>
            <person name="McCombie W.R."/>
            <person name="Ouyang S."/>
            <person name="Schwartz D.C."/>
            <person name="Tanaka T."/>
            <person name="Wu J."/>
            <person name="Zhou S."/>
            <person name="Childs K.L."/>
            <person name="Davidson R.M."/>
            <person name="Lin H."/>
            <person name="Quesada-Ocampo L."/>
            <person name="Vaillancourt B."/>
            <person name="Sakai H."/>
            <person name="Lee S.S."/>
            <person name="Kim J."/>
            <person name="Numa H."/>
            <person name="Itoh T."/>
            <person name="Buell C.R."/>
            <person name="Matsumoto T."/>
        </authorList>
    </citation>
    <scope>GENOME REANNOTATION</scope>
    <source>
        <strain>cv. Nipponbare</strain>
    </source>
</reference>
<reference key="5">
    <citation type="journal article" date="2003" name="Science">
        <title>Collection, mapping, and annotation of over 28,000 cDNA clones from japonica rice.</title>
        <authorList>
            <consortium name="The rice full-length cDNA consortium"/>
        </authorList>
    </citation>
    <scope>NUCLEOTIDE SEQUENCE [LARGE SCALE MRNA]</scope>
    <source>
        <strain>cv. Nipponbare</strain>
    </source>
</reference>